<evidence type="ECO:0000255" key="1"/>
<evidence type="ECO:0000256" key="2">
    <source>
        <dbReference type="SAM" id="MobiDB-lite"/>
    </source>
</evidence>
<evidence type="ECO:0000305" key="3"/>
<sequence length="547" mass="60765">MYTQFFGLSEPPFSISPNPKYLYMSERHGEALAHLNYGLQDGGGFVLLTGEVGTGKTTVSRCLLQQLPTETEIAYILNPSLTERDLLAAICDEFQLPYDKDAGLKLLFDLIRDHLLANLAAGKRSVVLVDEAQHLLPGVLEQLRLLTNLETDEKKLLQVVLIGQPELQQMLRQPLLRQLAQRITARYHLLPLSHQDVDAYVRFRLQVAGCVQPIFTPKALQTLHRLSGGIPRLINLICDRALIAAFARGSHKIVHGDISLAAYEVSGIRDEGTWQSGLMVALAGALLVATGWWGWQFFGFFPERPVIKVEVPVKVDDTPEQQEQLTRAINQALEPDSAMQNLYKVWGYQTELEEATCDNAPRAGLRCQEGDASLAELQALQHPALISLTDETGGIYYATLVNLGPDKANLLIGNQSWQVDRQWLSDFWGGSYTLLWRMPKGGVALIGNNAGATQVQWLDNALSRALQQPDRKVRRFDAELKNKLQQFQREQGLNPDGIAGSNTLLRLNVMAGEPMPKLEDESQRASTPATPDTMNDEPMVTLSEEAS</sequence>
<reference key="1">
    <citation type="journal article" date="1994" name="J. Bacteriol.">
        <title>Isolation and characterization of a second exe operon required for extracellular protein secretion in Aeromonas hydrophila.</title>
        <authorList>
            <person name="Jahagirdar R."/>
            <person name="Howard S.P."/>
        </authorList>
    </citation>
    <scope>NUCLEOTIDE SEQUENCE [GENOMIC DNA]</scope>
    <source>
        <strain>Ah65</strain>
    </source>
</reference>
<accession>P45754</accession>
<name>GSPA_AERHY</name>
<comment type="function">
    <text>Involved in a general secretion pathway (GSP) for the export of proteins.</text>
</comment>
<comment type="subcellular location">
    <subcellularLocation>
        <location>Cytoplasm</location>
    </subcellularLocation>
    <subcellularLocation>
        <location>Cell membrane</location>
        <topology>Peripheral membrane protein</topology>
    </subcellularLocation>
</comment>
<comment type="similarity">
    <text evidence="3">Belongs to the ExeA family.</text>
</comment>
<keyword id="KW-0067">ATP-binding</keyword>
<keyword id="KW-1003">Cell membrane</keyword>
<keyword id="KW-0963">Cytoplasm</keyword>
<keyword id="KW-0472">Membrane</keyword>
<keyword id="KW-0547">Nucleotide-binding</keyword>
<keyword id="KW-0813">Transport</keyword>
<dbReference type="EMBL" id="X81473">
    <property type="protein sequence ID" value="CAA57225.1"/>
    <property type="molecule type" value="Genomic_DNA"/>
</dbReference>
<dbReference type="PIR" id="I39593">
    <property type="entry name" value="I39593"/>
</dbReference>
<dbReference type="SMR" id="P45754"/>
<dbReference type="TCDB" id="9.B.42.1.1">
    <property type="family name" value="the exeab (exeab) secretin assembly/export complex family"/>
</dbReference>
<dbReference type="eggNOG" id="COG3267">
    <property type="taxonomic scope" value="Bacteria"/>
</dbReference>
<dbReference type="eggNOG" id="COG3409">
    <property type="taxonomic scope" value="Bacteria"/>
</dbReference>
<dbReference type="GO" id="GO:0005737">
    <property type="term" value="C:cytoplasm"/>
    <property type="evidence" value="ECO:0007669"/>
    <property type="project" value="UniProtKB-SubCell"/>
</dbReference>
<dbReference type="GO" id="GO:0005886">
    <property type="term" value="C:plasma membrane"/>
    <property type="evidence" value="ECO:0007669"/>
    <property type="project" value="UniProtKB-SubCell"/>
</dbReference>
<dbReference type="GO" id="GO:0005524">
    <property type="term" value="F:ATP binding"/>
    <property type="evidence" value="ECO:0007669"/>
    <property type="project" value="UniProtKB-KW"/>
</dbReference>
<dbReference type="GO" id="GO:0016887">
    <property type="term" value="F:ATP hydrolysis activity"/>
    <property type="evidence" value="ECO:0007669"/>
    <property type="project" value="InterPro"/>
</dbReference>
<dbReference type="CDD" id="cd00009">
    <property type="entry name" value="AAA"/>
    <property type="match status" value="1"/>
</dbReference>
<dbReference type="Gene3D" id="3.90.70.10">
    <property type="entry name" value="Cysteine proteinases"/>
    <property type="match status" value="1"/>
</dbReference>
<dbReference type="Gene3D" id="3.40.50.300">
    <property type="entry name" value="P-loop containing nucleotide triphosphate hydrolases"/>
    <property type="match status" value="1"/>
</dbReference>
<dbReference type="Gene3D" id="1.10.101.10">
    <property type="entry name" value="PGBD-like superfamily/PGBD"/>
    <property type="match status" value="1"/>
</dbReference>
<dbReference type="InterPro" id="IPR003593">
    <property type="entry name" value="AAA+_ATPase"/>
</dbReference>
<dbReference type="InterPro" id="IPR049945">
    <property type="entry name" value="AAA_22"/>
</dbReference>
<dbReference type="InterPro" id="IPR052026">
    <property type="entry name" value="ExeA_AAA_ATPase_DNA-bind"/>
</dbReference>
<dbReference type="InterPro" id="IPR048809">
    <property type="entry name" value="GspA_C39-like"/>
</dbReference>
<dbReference type="InterPro" id="IPR027417">
    <property type="entry name" value="P-loop_NTPase"/>
</dbReference>
<dbReference type="InterPro" id="IPR002477">
    <property type="entry name" value="Peptidoglycan-bd-like"/>
</dbReference>
<dbReference type="InterPro" id="IPR036365">
    <property type="entry name" value="PGBD-like_sf"/>
</dbReference>
<dbReference type="InterPro" id="IPR036366">
    <property type="entry name" value="PGBDSf"/>
</dbReference>
<dbReference type="PANTHER" id="PTHR35894">
    <property type="entry name" value="GENERAL SECRETION PATHWAY PROTEIN A-RELATED"/>
    <property type="match status" value="1"/>
</dbReference>
<dbReference type="PANTHER" id="PTHR35894:SF1">
    <property type="entry name" value="PHOSPHORIBULOKINASE _ URIDINE KINASE FAMILY"/>
    <property type="match status" value="1"/>
</dbReference>
<dbReference type="Pfam" id="PF13401">
    <property type="entry name" value="AAA_22"/>
    <property type="match status" value="1"/>
</dbReference>
<dbReference type="Pfam" id="PF21327">
    <property type="entry name" value="GspA_C39-like"/>
    <property type="match status" value="1"/>
</dbReference>
<dbReference type="Pfam" id="PF01471">
    <property type="entry name" value="PG_binding_1"/>
    <property type="match status" value="1"/>
</dbReference>
<dbReference type="SMART" id="SM00382">
    <property type="entry name" value="AAA"/>
    <property type="match status" value="1"/>
</dbReference>
<dbReference type="SUPFAM" id="SSF52540">
    <property type="entry name" value="P-loop containing nucleoside triphosphate hydrolases"/>
    <property type="match status" value="1"/>
</dbReference>
<dbReference type="SUPFAM" id="SSF47090">
    <property type="entry name" value="PGBD-like"/>
    <property type="match status" value="1"/>
</dbReference>
<feature type="chain" id="PRO_0000214993" description="General secretion pathway protein A">
    <location>
        <begin position="1"/>
        <end position="547"/>
    </location>
</feature>
<feature type="region of interest" description="Disordered" evidence="2">
    <location>
        <begin position="512"/>
        <end position="547"/>
    </location>
</feature>
<feature type="compositionally biased region" description="Polar residues" evidence="2">
    <location>
        <begin position="524"/>
        <end position="533"/>
    </location>
</feature>
<feature type="binding site" evidence="1">
    <location>
        <begin position="50"/>
        <end position="57"/>
    </location>
    <ligand>
        <name>ATP</name>
        <dbReference type="ChEBI" id="CHEBI:30616"/>
    </ligand>
</feature>
<gene>
    <name type="primary">exeA</name>
</gene>
<protein>
    <recommendedName>
        <fullName>General secretion pathway protein A</fullName>
    </recommendedName>
</protein>
<organism>
    <name type="scientific">Aeromonas hydrophila</name>
    <dbReference type="NCBI Taxonomy" id="644"/>
    <lineage>
        <taxon>Bacteria</taxon>
        <taxon>Pseudomonadati</taxon>
        <taxon>Pseudomonadota</taxon>
        <taxon>Gammaproteobacteria</taxon>
        <taxon>Aeromonadales</taxon>
        <taxon>Aeromonadaceae</taxon>
        <taxon>Aeromonas</taxon>
    </lineage>
</organism>
<proteinExistence type="inferred from homology"/>